<keyword id="KW-0204">Cytolysis</keyword>
<keyword id="KW-0354">Hemolysis</keyword>
<keyword id="KW-1032">Host cell membrane</keyword>
<keyword id="KW-1043">Host membrane</keyword>
<keyword id="KW-0446">Lipid-binding</keyword>
<keyword id="KW-0472">Membrane</keyword>
<keyword id="KW-0964">Secreted</keyword>
<keyword id="KW-0732">Signal</keyword>
<keyword id="KW-0800">Toxin</keyword>
<keyword id="KW-0812">Transmembrane</keyword>
<keyword id="KW-1134">Transmembrane beta strand</keyword>
<keyword id="KW-0843">Virulence</keyword>
<protein>
    <recommendedName>
        <fullName>Listeriolysin O</fullName>
    </recommendedName>
    <alternativeName>
        <fullName>LLO</fullName>
    </alternativeName>
    <alternativeName>
        <fullName>Thiol-activated cytolysin</fullName>
    </alternativeName>
</protein>
<name>TACY_LISMF</name>
<dbReference type="EMBL" id="U25443">
    <property type="protein sequence ID" value="AAA69525.1"/>
    <property type="molecule type" value="Genomic_DNA"/>
</dbReference>
<dbReference type="EMBL" id="AE017262">
    <property type="protein sequence ID" value="AAT03000.1"/>
    <property type="molecule type" value="Genomic_DNA"/>
</dbReference>
<dbReference type="RefSeq" id="WP_010958688.1">
    <property type="nucleotide sequence ID" value="NC_002973.6"/>
</dbReference>
<dbReference type="SMR" id="Q724L1"/>
<dbReference type="KEGG" id="lmf:LMOf2365_0213"/>
<dbReference type="HOGENOM" id="CLU_026912_0_0_9"/>
<dbReference type="GO" id="GO:0005576">
    <property type="term" value="C:extracellular region"/>
    <property type="evidence" value="ECO:0007669"/>
    <property type="project" value="UniProtKB-SubCell"/>
</dbReference>
<dbReference type="GO" id="GO:0020002">
    <property type="term" value="C:host cell plasma membrane"/>
    <property type="evidence" value="ECO:0007669"/>
    <property type="project" value="UniProtKB-SubCell"/>
</dbReference>
<dbReference type="GO" id="GO:0016020">
    <property type="term" value="C:membrane"/>
    <property type="evidence" value="ECO:0007669"/>
    <property type="project" value="UniProtKB-KW"/>
</dbReference>
<dbReference type="GO" id="GO:0015485">
    <property type="term" value="F:cholesterol binding"/>
    <property type="evidence" value="ECO:0007669"/>
    <property type="project" value="InterPro"/>
</dbReference>
<dbReference type="GO" id="GO:0090729">
    <property type="term" value="F:toxin activity"/>
    <property type="evidence" value="ECO:0007669"/>
    <property type="project" value="UniProtKB-KW"/>
</dbReference>
<dbReference type="GO" id="GO:0031640">
    <property type="term" value="P:killing of cells of another organism"/>
    <property type="evidence" value="ECO:0007669"/>
    <property type="project" value="UniProtKB-KW"/>
</dbReference>
<dbReference type="FunFam" id="2.60.40.1430:FF:000001">
    <property type="entry name" value="Thiol-activated cytolysin"/>
    <property type="match status" value="1"/>
</dbReference>
<dbReference type="Gene3D" id="3.30.1040.20">
    <property type="match status" value="1"/>
</dbReference>
<dbReference type="Gene3D" id="3.40.30.40">
    <property type="entry name" value="Perfringolysin"/>
    <property type="match status" value="1"/>
</dbReference>
<dbReference type="Gene3D" id="2.60.40.1430">
    <property type="entry name" value="Perfringolysin, domain 4"/>
    <property type="match status" value="1"/>
</dbReference>
<dbReference type="Gene3D" id="3.90.840.10">
    <property type="entry name" value="Thiol-activated cytolysin superfamily/Thiol-activated cytolysin, alpha-beta domain"/>
    <property type="match status" value="1"/>
</dbReference>
<dbReference type="InterPro" id="IPR035390">
    <property type="entry name" value="Thiol_cytolys_C"/>
</dbReference>
<dbReference type="InterPro" id="IPR038700">
    <property type="entry name" value="Thiol_cytolys_C_sf"/>
</dbReference>
<dbReference type="InterPro" id="IPR001869">
    <property type="entry name" value="Thiol_cytolysin"/>
</dbReference>
<dbReference type="InterPro" id="IPR036363">
    <property type="entry name" value="Thiol_cytolysin_ab_sf"/>
</dbReference>
<dbReference type="InterPro" id="IPR036359">
    <property type="entry name" value="Thiol_cytolysin_sf"/>
</dbReference>
<dbReference type="Pfam" id="PF17440">
    <property type="entry name" value="Thiol_cytolys_C"/>
    <property type="match status" value="1"/>
</dbReference>
<dbReference type="Pfam" id="PF01289">
    <property type="entry name" value="Thiol_cytolysin"/>
    <property type="match status" value="1"/>
</dbReference>
<dbReference type="PRINTS" id="PR01400">
    <property type="entry name" value="TACYTOLYSIN"/>
</dbReference>
<dbReference type="SUPFAM" id="SSF56978">
    <property type="entry name" value="Perfringolysin"/>
    <property type="match status" value="1"/>
</dbReference>
<dbReference type="PROSITE" id="PS00481">
    <property type="entry name" value="THIOL_CYTOLYSINS"/>
    <property type="match status" value="1"/>
</dbReference>
<reference key="1">
    <citation type="journal article" date="1998" name="Curr. Microbiol.">
        <title>Identification and characterization of nucleotide sequence differences in three virulence-associated genes of Listeria monocytogenes strains representing clinically important serotypes.</title>
        <authorList>
            <person name="Vines A."/>
            <person name="Swaminathan B."/>
        </authorList>
    </citation>
    <scope>NUCLEOTIDE SEQUENCE [GENOMIC DNA]</scope>
</reference>
<reference key="2">
    <citation type="journal article" date="2004" name="Nucleic Acids Res.">
        <title>Whole genome comparisons of serotype 4b and 1/2a strains of the food-borne pathogen Listeria monocytogenes reveal new insights into the core genome components of this species.</title>
        <authorList>
            <person name="Nelson K.E."/>
            <person name="Fouts D.E."/>
            <person name="Mongodin E.F."/>
            <person name="Ravel J."/>
            <person name="DeBoy R.T."/>
            <person name="Kolonay J.F."/>
            <person name="Rasko D.A."/>
            <person name="Angiuoli S.V."/>
            <person name="Gill S.R."/>
            <person name="Paulsen I.T."/>
            <person name="Peterson J.D."/>
            <person name="White O."/>
            <person name="Nelson W.C."/>
            <person name="Nierman W.C."/>
            <person name="Beanan M.J."/>
            <person name="Brinkac L.M."/>
            <person name="Daugherty S.C."/>
            <person name="Dodson R.J."/>
            <person name="Durkin A.S."/>
            <person name="Madupu R."/>
            <person name="Haft D.H."/>
            <person name="Selengut J."/>
            <person name="Van Aken S.E."/>
            <person name="Khouri H.M."/>
            <person name="Fedorova N."/>
            <person name="Forberger H.A."/>
            <person name="Tran B."/>
            <person name="Kathariou S."/>
            <person name="Wonderling L.D."/>
            <person name="Uhlich G.A."/>
            <person name="Bayles D.O."/>
            <person name="Luchansky J.B."/>
            <person name="Fraser C.M."/>
        </authorList>
    </citation>
    <scope>NUCLEOTIDE SEQUENCE [LARGE SCALE GENOMIC DNA]</scope>
    <source>
        <strain>F2365</strain>
    </source>
</reference>
<accession>Q724L1</accession>
<evidence type="ECO:0000250" key="1">
    <source>
        <dbReference type="UniProtKB" id="P0C2E9"/>
    </source>
</evidence>
<evidence type="ECO:0000250" key="2">
    <source>
        <dbReference type="UniProtKB" id="P13128"/>
    </source>
</evidence>
<evidence type="ECO:0000250" key="3">
    <source>
        <dbReference type="UniProtKB" id="Q04IN8"/>
    </source>
</evidence>
<evidence type="ECO:0000255" key="4"/>
<evidence type="ECO:0000305" key="5"/>
<sequence>MKKIMLVFITLILVSLPIAQQTEAKDASAFNKENLISSIAPPASPPASPKTPIEKKHADEIDKYIQGLDYNKNNVLVYHGDAVTNVPPRKGYKDGNEYIVVEKKKKSINQNNADIQVVNAISSLTYPGALVKANSELVENQPDVLPVKRDSLTLSIDLPGMTNQDNKIVVKNATKSNVNNAVNTLVERWNEKYAQAYPNVSAKIDYDDEMAYSESQLIAKFGTAFKAVNNSLNVNFGAISEGKMQEEVISFKQIYYNVNVNEPTRPSRFFGKAVTKEQLQALGVNAENPPAYISSVAYGRQVYLKLSTNSHSTKVKAAFDAAVSGKSVSGDVELTNIIKNSSFKAVIYGGSAKDEVQIIDGNLGDLRDILKKGATFNRETPGVPIAYTTNFLKDNELAVIKNNSEYIETTSKAYTDGKINIDHSGGYVAQFNISWDEINYDPEGNEIVQHKNWSENNKSKLAHFTSSIYLPGNARNINVYAKECTGLAWEWWRTVIDDRNLPLVKNRNISIWGTTLYPKYSNSVDNPIE</sequence>
<gene>
    <name type="primary">hly</name>
    <name type="ordered locus">LMOf2365_0213</name>
</gene>
<feature type="signal peptide" evidence="4">
    <location>
        <begin position="1"/>
        <end position="24"/>
    </location>
</feature>
<feature type="chain" id="PRO_0000034101" description="Listeriolysin O">
    <location>
        <begin position="25"/>
        <end position="529"/>
    </location>
</feature>
<feature type="transmembrane region" description="Beta stranded" evidence="3">
    <location>
        <begin position="214"/>
        <end position="227"/>
    </location>
</feature>
<feature type="transmembrane region" description="Beta stranded" evidence="3">
    <location>
        <begin position="234"/>
        <end position="243"/>
    </location>
</feature>
<feature type="transmembrane region" description="Beta stranded" evidence="3">
    <location>
        <begin position="312"/>
        <end position="321"/>
    </location>
</feature>
<feature type="transmembrane region" description="Beta stranded" evidence="3">
    <location>
        <begin position="329"/>
        <end position="341"/>
    </location>
</feature>
<feature type="short sequence motif" description="Conserved undecapeptide" evidence="5">
    <location>
        <begin position="483"/>
        <end position="493"/>
    </location>
</feature>
<feature type="short sequence motif" description="Cholesterol binding" evidence="1">
    <location>
        <begin position="515"/>
        <end position="516"/>
    </location>
</feature>
<organism>
    <name type="scientific">Listeria monocytogenes serotype 4b (strain F2365)</name>
    <dbReference type="NCBI Taxonomy" id="265669"/>
    <lineage>
        <taxon>Bacteria</taxon>
        <taxon>Bacillati</taxon>
        <taxon>Bacillota</taxon>
        <taxon>Bacilli</taxon>
        <taxon>Bacillales</taxon>
        <taxon>Listeriaceae</taxon>
        <taxon>Listeria</taxon>
    </lineage>
</organism>
<proteinExistence type="inferred from homology"/>
<comment type="function">
    <text evidence="2">A cholesterol-dependent toxin that causes cytolysis by forming pores in cholesterol containing host membranes. After binding to target membranes, the protein undergoes a major conformation change, leading to its insertion in the host membrane and formation of an oligomeric pore complex. Cholesterol is required for binding to host membranes, membrane insertion and pore formation; cholesterol binding is mediated by a Thr-Leu pair in the C-terminus. Acts as a major virulence factor required for the escape of bacteria from phagosomal vacuoles and entry into the host cytosol. Can be reversibly inactivated by oxidation.</text>
</comment>
<comment type="activity regulation">
    <text evidence="2">Activity of listeriolysin O is regulated on multiple levels. It should be high in the phagosome, thereby allowing escape of the bacteria from the phagosomal compartment. Then, once inside the host cytosol, the activity must be controlled to prevent lysis of the host plasma membrane and loss of the intracellular environment.</text>
</comment>
<comment type="subunit">
    <text evidence="3">Homooligomeric pore complex of 35 to 50 subunits; when inserted in the host membrane.</text>
</comment>
<comment type="subcellular location">
    <subcellularLocation>
        <location evidence="2">Secreted</location>
    </subcellularLocation>
    <subcellularLocation>
        <location evidence="2">Host membrane</location>
        <topology evidence="3">Multi-pass membrane protein</topology>
    </subcellularLocation>
    <subcellularLocation>
        <location evidence="2">Host cell membrane</location>
        <topology evidence="3">Multi-pass membrane protein</topology>
    </subcellularLocation>
    <text evidence="3">Secreted as soluble protein that then inserts into the host membrane and forms pores formed by transmembrane beta-strands.</text>
</comment>
<comment type="similarity">
    <text evidence="5">Belongs to the cholesterol-dependent cytolysin family.</text>
</comment>